<proteinExistence type="inferred from homology"/>
<name>LYS12_PENEN</name>
<dbReference type="EC" id="3.2.1.14" evidence="11"/>
<dbReference type="EMBL" id="JQFZ01000238">
    <property type="protein sequence ID" value="KGO54040.1"/>
    <property type="molecule type" value="Genomic_DNA"/>
</dbReference>
<dbReference type="RefSeq" id="XP_016596547.1">
    <property type="nucleotide sequence ID" value="XM_016739853.1"/>
</dbReference>
<dbReference type="SMR" id="A0A0A2JP37"/>
<dbReference type="STRING" id="27334.A0A0A2JP37"/>
<dbReference type="GeneID" id="27675272"/>
<dbReference type="VEuPathDB" id="FungiDB:PEXP_100930"/>
<dbReference type="HOGENOM" id="CLU_001482_1_0_1"/>
<dbReference type="OrthoDB" id="73875at2759"/>
<dbReference type="PhylomeDB" id="A0A0A2JP37"/>
<dbReference type="Proteomes" id="UP000030143">
    <property type="component" value="Unassembled WGS sequence"/>
</dbReference>
<dbReference type="GO" id="GO:0005576">
    <property type="term" value="C:extracellular region"/>
    <property type="evidence" value="ECO:0007669"/>
    <property type="project" value="UniProtKB-SubCell"/>
</dbReference>
<dbReference type="GO" id="GO:0008061">
    <property type="term" value="F:chitin binding"/>
    <property type="evidence" value="ECO:0007669"/>
    <property type="project" value="UniProtKB-KW"/>
</dbReference>
<dbReference type="GO" id="GO:0008843">
    <property type="term" value="F:endochitinase activity"/>
    <property type="evidence" value="ECO:0007669"/>
    <property type="project" value="UniProtKB-EC"/>
</dbReference>
<dbReference type="GO" id="GO:0006032">
    <property type="term" value="P:chitin catabolic process"/>
    <property type="evidence" value="ECO:0007669"/>
    <property type="project" value="UniProtKB-KW"/>
</dbReference>
<dbReference type="GO" id="GO:0000272">
    <property type="term" value="P:polysaccharide catabolic process"/>
    <property type="evidence" value="ECO:0007669"/>
    <property type="project" value="UniProtKB-KW"/>
</dbReference>
<dbReference type="CDD" id="cd00035">
    <property type="entry name" value="ChtBD1"/>
    <property type="match status" value="1"/>
</dbReference>
<dbReference type="CDD" id="cd02878">
    <property type="entry name" value="GH18_zymocin_alpha"/>
    <property type="match status" value="1"/>
</dbReference>
<dbReference type="CDD" id="cd00118">
    <property type="entry name" value="LysM"/>
    <property type="match status" value="1"/>
</dbReference>
<dbReference type="Gene3D" id="3.10.50.10">
    <property type="match status" value="1"/>
</dbReference>
<dbReference type="Gene3D" id="3.30.60.10">
    <property type="entry name" value="Endochitinase-like"/>
    <property type="match status" value="1"/>
</dbReference>
<dbReference type="Gene3D" id="3.20.20.80">
    <property type="entry name" value="Glycosidases"/>
    <property type="match status" value="1"/>
</dbReference>
<dbReference type="Gene3D" id="3.10.350.10">
    <property type="entry name" value="LysM domain"/>
    <property type="match status" value="2"/>
</dbReference>
<dbReference type="InterPro" id="IPR001002">
    <property type="entry name" value="Chitin-bd_1"/>
</dbReference>
<dbReference type="InterPro" id="IPR011583">
    <property type="entry name" value="Chitinase_II/V-like_cat"/>
</dbReference>
<dbReference type="InterPro" id="IPR029070">
    <property type="entry name" value="Chitinase_insertion_sf"/>
</dbReference>
<dbReference type="InterPro" id="IPR029226">
    <property type="entry name" value="Ecp2-like"/>
</dbReference>
<dbReference type="InterPro" id="IPR036861">
    <property type="entry name" value="Endochitinase-like_sf"/>
</dbReference>
<dbReference type="InterPro" id="IPR001223">
    <property type="entry name" value="Glyco_hydro18_cat"/>
</dbReference>
<dbReference type="InterPro" id="IPR001579">
    <property type="entry name" value="Glyco_hydro_18_chit_AS"/>
</dbReference>
<dbReference type="InterPro" id="IPR017853">
    <property type="entry name" value="Glycoside_hydrolase_SF"/>
</dbReference>
<dbReference type="InterPro" id="IPR053214">
    <property type="entry name" value="LysM12-like"/>
</dbReference>
<dbReference type="InterPro" id="IPR018392">
    <property type="entry name" value="LysM_dom"/>
</dbReference>
<dbReference type="InterPro" id="IPR036779">
    <property type="entry name" value="LysM_dom_sf"/>
</dbReference>
<dbReference type="PANTHER" id="PTHR47700:SF1">
    <property type="entry name" value="CHITINASE"/>
    <property type="match status" value="1"/>
</dbReference>
<dbReference type="PANTHER" id="PTHR47700">
    <property type="entry name" value="V CHITINASE, PUTATIVE (AFU_ORTHOLOGUE AFUA_6G13720)-RELATED"/>
    <property type="match status" value="1"/>
</dbReference>
<dbReference type="Pfam" id="PF00187">
    <property type="entry name" value="Chitin_bind_1"/>
    <property type="match status" value="1"/>
</dbReference>
<dbReference type="Pfam" id="PF00704">
    <property type="entry name" value="Glyco_hydro_18"/>
    <property type="match status" value="1"/>
</dbReference>
<dbReference type="Pfam" id="PF14856">
    <property type="entry name" value="Hce2"/>
    <property type="match status" value="1"/>
</dbReference>
<dbReference type="Pfam" id="PF01476">
    <property type="entry name" value="LysM"/>
    <property type="match status" value="1"/>
</dbReference>
<dbReference type="SMART" id="SM00270">
    <property type="entry name" value="ChtBD1"/>
    <property type="match status" value="1"/>
</dbReference>
<dbReference type="SMART" id="SM00636">
    <property type="entry name" value="Glyco_18"/>
    <property type="match status" value="1"/>
</dbReference>
<dbReference type="SMART" id="SM00257">
    <property type="entry name" value="LysM"/>
    <property type="match status" value="2"/>
</dbReference>
<dbReference type="SUPFAM" id="SSF51445">
    <property type="entry name" value="(Trans)glycosidases"/>
    <property type="match status" value="1"/>
</dbReference>
<dbReference type="SUPFAM" id="SSF54556">
    <property type="entry name" value="Chitinase insertion domain"/>
    <property type="match status" value="1"/>
</dbReference>
<dbReference type="SUPFAM" id="SSF54106">
    <property type="entry name" value="LysM domain"/>
    <property type="match status" value="1"/>
</dbReference>
<dbReference type="SUPFAM" id="SSF57016">
    <property type="entry name" value="Plant lectins/antimicrobial peptides"/>
    <property type="match status" value="1"/>
</dbReference>
<dbReference type="PROSITE" id="PS50941">
    <property type="entry name" value="CHIT_BIND_I_2"/>
    <property type="match status" value="1"/>
</dbReference>
<dbReference type="PROSITE" id="PS01095">
    <property type="entry name" value="GH18_1"/>
    <property type="match status" value="1"/>
</dbReference>
<dbReference type="PROSITE" id="PS51910">
    <property type="entry name" value="GH18_2"/>
    <property type="match status" value="1"/>
</dbReference>
<dbReference type="PROSITE" id="PS51782">
    <property type="entry name" value="LYSM"/>
    <property type="match status" value="1"/>
</dbReference>
<keyword id="KW-0119">Carbohydrate metabolism</keyword>
<keyword id="KW-0146">Chitin degradation</keyword>
<keyword id="KW-0147">Chitin-binding</keyword>
<keyword id="KW-1015">Disulfide bond</keyword>
<keyword id="KW-0325">Glycoprotein</keyword>
<keyword id="KW-0326">Glycosidase</keyword>
<keyword id="KW-0378">Hydrolase</keyword>
<keyword id="KW-0624">Polysaccharide degradation</keyword>
<keyword id="KW-1185">Reference proteome</keyword>
<keyword id="KW-0677">Repeat</keyword>
<keyword id="KW-0964">Secreted</keyword>
<keyword id="KW-0732">Signal</keyword>
<keyword id="KW-0843">Virulence</keyword>
<evidence type="ECO:0000250" key="1">
    <source>
        <dbReference type="UniProtKB" id="Q873X9"/>
    </source>
</evidence>
<evidence type="ECO:0000255" key="2"/>
<evidence type="ECO:0000255" key="3">
    <source>
        <dbReference type="PROSITE-ProRule" id="PRU00261"/>
    </source>
</evidence>
<evidence type="ECO:0000255" key="4">
    <source>
        <dbReference type="PROSITE-ProRule" id="PRU00498"/>
    </source>
</evidence>
<evidence type="ECO:0000255" key="5">
    <source>
        <dbReference type="PROSITE-ProRule" id="PRU01118"/>
    </source>
</evidence>
<evidence type="ECO:0000255" key="6">
    <source>
        <dbReference type="PROSITE-ProRule" id="PRU01258"/>
    </source>
</evidence>
<evidence type="ECO:0000256" key="7">
    <source>
        <dbReference type="SAM" id="MobiDB-lite"/>
    </source>
</evidence>
<evidence type="ECO:0000269" key="8">
    <source>
    </source>
</evidence>
<evidence type="ECO:0000303" key="9">
    <source>
    </source>
</evidence>
<evidence type="ECO:0000305" key="10"/>
<evidence type="ECO:0000305" key="11">
    <source>
    </source>
</evidence>
<comment type="function">
    <text evidence="1 11">Secreted chitinase involved in the degradation of chitin, a component of the cell walls of fungi and exoskeletal elements of some animals (including worms and arthropods) (By similarity). Involved in pathogenesis via manipulation of host defenses for successful infection (Probable).</text>
</comment>
<comment type="catalytic activity">
    <reaction evidence="11">
        <text>Random endo-hydrolysis of N-acetyl-beta-D-glucosaminide (1-&gt;4)-beta-linkages in chitin and chitodextrins.</text>
        <dbReference type="EC" id="3.2.1.14"/>
    </reaction>
</comment>
<comment type="subcellular location">
    <subcellularLocation>
        <location evidence="11">Secreted</location>
    </subcellularLocation>
</comment>
<comment type="domain">
    <text evidence="11">The LysM (lysin motif) domains are small globular domains involved in binding chitin in eukaryotes. LysM12 contains one LysM domains.</text>
</comment>
<comment type="disruption phenotype">
    <text evidence="8">Leads to a decreased expansion rate of decayed lesion on infected fruits.</text>
</comment>
<comment type="miscellaneous">
    <text evidence="10">In plants, chitin acts as a microbe-associated molecular pattern (MAMP) that is recognized by lysin motif (LysM)-containing plant cell surface-localized pattern recognition receptors (PRRs) that activate a plethora of downstream immune responses.</text>
</comment>
<comment type="similarity">
    <text evidence="10">Belongs to the glycosyl hydrolase 18 family. Chitinase class V subfamily.</text>
</comment>
<gene>
    <name evidence="9" type="primary">LysM12</name>
    <name type="ORF">PEX2_025780</name>
</gene>
<accession>A0A0A2JP37</accession>
<protein>
    <recommendedName>
        <fullName evidence="9">Secreted chitinase LysM12</fullName>
        <ecNumber evidence="11">3.2.1.14</ecNumber>
    </recommendedName>
    <alternativeName>
        <fullName evidence="9">LysM domain-containing protein 12</fullName>
    </alternativeName>
    <alternativeName>
        <fullName evidence="9">Secreted LysM effector LysM12</fullName>
    </alternativeName>
</protein>
<sequence length="1500" mass="164530">MAPLWNGMAAGLLLSAAVVSGQANSRLGASPSYQGFSNICPEQCIVTGPEPSNWSTYNDMNRLANCNQAMLYGFNLYDDVDDADSYHRIFACTAYGNDWSDDSQSHVTNSRPEKEHKVNYEIGWSSYSPGTESDYRSLIRQMRDYVARGHISPSKTAMLYAQFGYTSAGIYIGNSLQSKDIGDVALQSLIDDSHDFDGRRDSLTMQLCGPHYDSQHVFGFMALRNGTFRAIQSAFKSWSNAECLDFEHSTNFTASTHFTSSMLSSIKAGNTTTSGIQAGGSALPAKLSTQHTKNLMSSTGECRTQKVQNGDSCAAIATRCGISGADFTKYNSEKSFCSKLKPGQHVCCSSGALPDFSPKPKEDGSCATTTVGDGESCSTIAAANSLTEKDIDGFNQKTWGWGGCKNIFKDSVICISKGSPPMPAEVSDAECGPQVPGTKLPKDMSKLADLNPCPLNACCNTFGHCGTTAEFCTDTNTGAPGTAKAGTNGCISHCGMDIVKGNAPTKFRSVGYYESYQFKRQCLYQDVMQVDHSKYTHLHFGFVDISSDYEISINDKSANYQFHNFKYISGPKRIVSFGGWDFSTQASTYQIFRQGTSAANRKKLATNIANFVKENNLDGVDIDWEYPSAPDIPGLPSGDKSEGNNYLEFLVVLKNLLGDKSVSIAAPGSYWYLKGFPIAKISKVIDYIVFMTYDLHGQWDAGNPNAQPGCDDGSCLRSHVNMTETKESLSLITKAGVDSGKVVVGVSSYGRSFRMVDADCDGPMCKFTGTRLHSNAEKADCTDTAGYISNAEINQLLDHNSSRVNKHYVDTHSNSNIMVYDNTNWVAYMSPEIRAERTKMYQSLGMGGTVNWATDLEKFNDAPEGVENWPGMILQMKSGTITPRGAGSRSGNWTKIGCDNEYSRETPYWSPMTRWRQLDAAGAWSDLIADWKNYRDKDHTGDKLSFSAQISYLLGGPDNVKCGQIDGDSNCPLISCKLFNIGNGTKSGAAAELIWDSFFKIHQMYAKFKSALVTDAALVIDNTLPHLENTFAPVPPPEDNAWLDMVLDFVSMGVPMVGGKFIDDFLKMIPAMTTKSDISLDHYKEVLSAILDSPATIATNLKGTSDPNDWTPEKQAEFSKYMGQSLQGWNYIFTKDLENLFDGTDKSIERLTIMISDGRMIDGIPKDIPYPDKTKRKDKDDDDNKKTEATDSEKKSVEDGFLTAFWAYSIPAVWQASGHHPFIIDTGRSCDDKDGDKYTKDLKSACYENRLYQLADPDGRSHPCDYDCGITGGCKCDDSAFSSLKGVEELDGKAWSGLKVEDIIIGSVRTYKQNGNENGGGTADPTDSGTFEALKQMDITTPGFMRLPVCSETLARTSWENADKTEATRNKDGFPCNNDNGRSYCTTSESTYIEETTSGSPLIDDCLVIVKNIEGTTGSWNKLIEIQYGIAHFGTCTFGIEGKGRHGNSNVYIGAQDIVDIIRYTSKHWGHGTDKMQGKGVMQCNGNIKQQELHWAIYKK</sequence>
<organism>
    <name type="scientific">Penicillium expansum</name>
    <name type="common">Blue mold rot fungus</name>
    <dbReference type="NCBI Taxonomy" id="27334"/>
    <lineage>
        <taxon>Eukaryota</taxon>
        <taxon>Fungi</taxon>
        <taxon>Dikarya</taxon>
        <taxon>Ascomycota</taxon>
        <taxon>Pezizomycotina</taxon>
        <taxon>Eurotiomycetes</taxon>
        <taxon>Eurotiomycetidae</taxon>
        <taxon>Eurotiales</taxon>
        <taxon>Aspergillaceae</taxon>
        <taxon>Penicillium</taxon>
    </lineage>
</organism>
<reference key="1">
    <citation type="journal article" date="2015" name="Mol. Plant Microbe Interact.">
        <title>Genome, transcriptome, and functional analyses of Penicillium expansum provide new insights into secondary metabolism and pathogenicity.</title>
        <authorList>
            <person name="Ballester A.R."/>
            <person name="Marcet-Houben M."/>
            <person name="Levin E."/>
            <person name="Sela N."/>
            <person name="Selma-Lazaro C."/>
            <person name="Carmona L."/>
            <person name="Wisniewski M."/>
            <person name="Droby S."/>
            <person name="Gonzalez-Candelas L."/>
            <person name="Gabaldon T."/>
        </authorList>
    </citation>
    <scope>NUCLEOTIDE SEQUENCE [LARGE SCALE GENOMIC DNA]</scope>
    <source>
        <strain>MD-8</strain>
    </source>
</reference>
<reference key="2">
    <citation type="journal article" date="2020" name="Mol. Genet. Genomics">
        <title>Multiple transcriptomic analyses and characterization of pathogen-related core effectors and LysM family members reveal their differential roles in fungal growth and pathogenicity in Penicillium expansum.</title>
        <authorList>
            <person name="Chen D."/>
            <person name="Li G."/>
            <person name="Liu J."/>
            <person name="Wisniewski M."/>
            <person name="Droby S."/>
            <person name="Levin E."/>
            <person name="Huang S."/>
            <person name="Liu Y."/>
        </authorList>
    </citation>
    <scope>FUNCTION</scope>
    <scope>DISRUPTION PHENOTYPE</scope>
    <scope>DOMAIN</scope>
</reference>
<feature type="signal peptide" evidence="2">
    <location>
        <begin position="1"/>
        <end position="23"/>
    </location>
</feature>
<feature type="chain" id="PRO_5009752677" description="Secreted chitinase LysM12">
    <location>
        <begin position="24"/>
        <end position="1500"/>
    </location>
</feature>
<feature type="domain" description="LysM 1" evidence="5">
    <location>
        <begin position="303"/>
        <end position="348"/>
    </location>
</feature>
<feature type="domain" description="LysM 2" evidence="5">
    <location>
        <begin position="367"/>
        <end position="415"/>
    </location>
</feature>
<feature type="domain" description="Chitin-binding type-1" evidence="3">
    <location>
        <begin position="428"/>
        <end position="496"/>
    </location>
</feature>
<feature type="domain" description="GH18" evidence="6">
    <location>
        <begin position="507"/>
        <end position="879"/>
    </location>
</feature>
<feature type="region of interest" description="Disordered" evidence="7">
    <location>
        <begin position="1164"/>
        <end position="1193"/>
    </location>
</feature>
<feature type="compositionally biased region" description="Basic and acidic residues" evidence="7">
    <location>
        <begin position="1169"/>
        <end position="1193"/>
    </location>
</feature>
<feature type="active site" description="Proton donor" evidence="6">
    <location>
        <position position="625"/>
    </location>
</feature>
<feature type="binding site" evidence="6">
    <location>
        <position position="626"/>
    </location>
    <ligand>
        <name>chitin</name>
        <dbReference type="ChEBI" id="CHEBI:17029"/>
    </ligand>
</feature>
<feature type="binding site" evidence="6">
    <location>
        <position position="852"/>
    </location>
    <ligand>
        <name>chitin</name>
        <dbReference type="ChEBI" id="CHEBI:17029"/>
    </ligand>
</feature>
<feature type="glycosylation site" description="N-linked (GlcNAc...) asparagine" evidence="4">
    <location>
        <position position="53"/>
    </location>
</feature>
<feature type="glycosylation site" description="N-linked (GlcNAc...) asparagine" evidence="4">
    <location>
        <position position="225"/>
    </location>
</feature>
<feature type="glycosylation site" description="N-linked (GlcNAc...) asparagine" evidence="4">
    <location>
        <position position="251"/>
    </location>
</feature>
<feature type="glycosylation site" description="N-linked (GlcNAc...) asparagine" evidence="4">
    <location>
        <position position="270"/>
    </location>
</feature>
<feature type="glycosylation site" description="N-linked (GlcNAc...) asparagine" evidence="4">
    <location>
        <position position="721"/>
    </location>
</feature>
<feature type="glycosylation site" description="N-linked (GlcNAc...) asparagine" evidence="4">
    <location>
        <position position="800"/>
    </location>
</feature>
<feature type="glycosylation site" description="N-linked (GlcNAc...) asparagine" evidence="4">
    <location>
        <position position="892"/>
    </location>
</feature>
<feature type="glycosylation site" description="N-linked (GlcNAc...) asparagine" evidence="4">
    <location>
        <position position="983"/>
    </location>
</feature>
<feature type="disulfide bond" evidence="3">
    <location>
        <begin position="431"/>
        <end position="459"/>
    </location>
</feature>
<feature type="disulfide bond" evidence="3">
    <location>
        <begin position="453"/>
        <end position="465"/>
    </location>
</feature>
<feature type="disulfide bond" evidence="3">
    <location>
        <begin position="458"/>
        <end position="472"/>
    </location>
</feature>
<feature type="disulfide bond" evidence="3">
    <location>
        <begin position="490"/>
        <end position="494"/>
    </location>
</feature>